<evidence type="ECO:0000255" key="1">
    <source>
        <dbReference type="HAMAP-Rule" id="MF_00217"/>
    </source>
</evidence>
<gene>
    <name evidence="1" type="primary">mvk</name>
    <name type="ordered locus">PF1637</name>
</gene>
<dbReference type="EC" id="2.7.1.36" evidence="1"/>
<dbReference type="EMBL" id="AE009950">
    <property type="protein sequence ID" value="AAL81761.1"/>
    <property type="molecule type" value="Genomic_DNA"/>
</dbReference>
<dbReference type="RefSeq" id="WP_011012784.1">
    <property type="nucleotide sequence ID" value="NZ_CP023154.1"/>
</dbReference>
<dbReference type="SMR" id="Q8U0F3"/>
<dbReference type="STRING" id="186497.PF1637"/>
<dbReference type="PaxDb" id="186497-PF1637"/>
<dbReference type="KEGG" id="pfu:PF1637"/>
<dbReference type="PATRIC" id="fig|186497.12.peg.1703"/>
<dbReference type="eggNOG" id="arCOG01028">
    <property type="taxonomic scope" value="Archaea"/>
</dbReference>
<dbReference type="HOGENOM" id="CLU_017814_0_0_2"/>
<dbReference type="OrthoDB" id="19001at2157"/>
<dbReference type="PhylomeDB" id="Q8U0F3"/>
<dbReference type="UniPathway" id="UPA00057">
    <property type="reaction ID" value="UER00098"/>
</dbReference>
<dbReference type="Proteomes" id="UP000001013">
    <property type="component" value="Chromosome"/>
</dbReference>
<dbReference type="GO" id="GO:0005829">
    <property type="term" value="C:cytosol"/>
    <property type="evidence" value="ECO:0007669"/>
    <property type="project" value="TreeGrafter"/>
</dbReference>
<dbReference type="GO" id="GO:0005524">
    <property type="term" value="F:ATP binding"/>
    <property type="evidence" value="ECO:0007669"/>
    <property type="project" value="UniProtKB-UniRule"/>
</dbReference>
<dbReference type="GO" id="GO:0000287">
    <property type="term" value="F:magnesium ion binding"/>
    <property type="evidence" value="ECO:0007669"/>
    <property type="project" value="UniProtKB-UniRule"/>
</dbReference>
<dbReference type="GO" id="GO:0004496">
    <property type="term" value="F:mevalonate kinase activity"/>
    <property type="evidence" value="ECO:0007669"/>
    <property type="project" value="UniProtKB-UniRule"/>
</dbReference>
<dbReference type="GO" id="GO:0019287">
    <property type="term" value="P:isopentenyl diphosphate biosynthetic process, mevalonate pathway"/>
    <property type="evidence" value="ECO:0007669"/>
    <property type="project" value="UniProtKB-UniRule"/>
</dbReference>
<dbReference type="Gene3D" id="3.30.230.10">
    <property type="match status" value="1"/>
</dbReference>
<dbReference type="Gene3D" id="3.30.70.890">
    <property type="entry name" value="GHMP kinase, C-terminal domain"/>
    <property type="match status" value="1"/>
</dbReference>
<dbReference type="HAMAP" id="MF_00217">
    <property type="entry name" value="Mevalonate_kinase"/>
    <property type="match status" value="1"/>
</dbReference>
<dbReference type="InterPro" id="IPR013750">
    <property type="entry name" value="GHMP_kinase_C_dom"/>
</dbReference>
<dbReference type="InterPro" id="IPR036554">
    <property type="entry name" value="GHMP_kinase_C_sf"/>
</dbReference>
<dbReference type="InterPro" id="IPR006204">
    <property type="entry name" value="GHMP_kinase_N_dom"/>
</dbReference>
<dbReference type="InterPro" id="IPR006203">
    <property type="entry name" value="GHMP_knse_ATP-bd_CS"/>
</dbReference>
<dbReference type="InterPro" id="IPR006205">
    <property type="entry name" value="Mev_gal_kin"/>
</dbReference>
<dbReference type="InterPro" id="IPR022937">
    <property type="entry name" value="Mevalonate_kinase_arc"/>
</dbReference>
<dbReference type="InterPro" id="IPR020568">
    <property type="entry name" value="Ribosomal_Su5_D2-typ_SF"/>
</dbReference>
<dbReference type="InterPro" id="IPR014721">
    <property type="entry name" value="Ribsml_uS5_D2-typ_fold_subgr"/>
</dbReference>
<dbReference type="NCBIfam" id="TIGR00549">
    <property type="entry name" value="mevalon_kin"/>
    <property type="match status" value="1"/>
</dbReference>
<dbReference type="NCBIfam" id="NF003036">
    <property type="entry name" value="PRK03926.1"/>
    <property type="match status" value="1"/>
</dbReference>
<dbReference type="PANTHER" id="PTHR43290">
    <property type="entry name" value="MEVALONATE KINASE"/>
    <property type="match status" value="1"/>
</dbReference>
<dbReference type="PANTHER" id="PTHR43290:SF2">
    <property type="entry name" value="MEVALONATE KINASE"/>
    <property type="match status" value="1"/>
</dbReference>
<dbReference type="Pfam" id="PF08544">
    <property type="entry name" value="GHMP_kinases_C"/>
    <property type="match status" value="1"/>
</dbReference>
<dbReference type="Pfam" id="PF00288">
    <property type="entry name" value="GHMP_kinases_N"/>
    <property type="match status" value="1"/>
</dbReference>
<dbReference type="PRINTS" id="PR00959">
    <property type="entry name" value="MEVGALKINASE"/>
</dbReference>
<dbReference type="SUPFAM" id="SSF55060">
    <property type="entry name" value="GHMP Kinase, C-terminal domain"/>
    <property type="match status" value="1"/>
</dbReference>
<dbReference type="SUPFAM" id="SSF54211">
    <property type="entry name" value="Ribosomal protein S5 domain 2-like"/>
    <property type="match status" value="1"/>
</dbReference>
<dbReference type="PROSITE" id="PS00627">
    <property type="entry name" value="GHMP_KINASES_ATP"/>
    <property type="match status" value="1"/>
</dbReference>
<reference key="1">
    <citation type="journal article" date="1999" name="Genetics">
        <title>Divergence of the hyperthermophilic archaea Pyrococcus furiosus and P. horikoshii inferred from complete genomic sequences.</title>
        <authorList>
            <person name="Maeder D.L."/>
            <person name="Weiss R.B."/>
            <person name="Dunn D.M."/>
            <person name="Cherry J.L."/>
            <person name="Gonzalez J.M."/>
            <person name="DiRuggiero J."/>
            <person name="Robb F.T."/>
        </authorList>
    </citation>
    <scope>NUCLEOTIDE SEQUENCE [LARGE SCALE GENOMIC DNA]</scope>
    <source>
        <strain>ATCC 43587 / DSM 3638 / JCM 8422 / Vc1</strain>
    </source>
</reference>
<accession>Q8U0F3</accession>
<organism>
    <name type="scientific">Pyrococcus furiosus (strain ATCC 43587 / DSM 3638 / JCM 8422 / Vc1)</name>
    <dbReference type="NCBI Taxonomy" id="186497"/>
    <lineage>
        <taxon>Archaea</taxon>
        <taxon>Methanobacteriati</taxon>
        <taxon>Methanobacteriota</taxon>
        <taxon>Thermococci</taxon>
        <taxon>Thermococcales</taxon>
        <taxon>Thermococcaceae</taxon>
        <taxon>Pyrococcus</taxon>
    </lineage>
</organism>
<protein>
    <recommendedName>
        <fullName evidence="1">Mevalonate kinase</fullName>
        <shortName evidence="1">MK</shortName>
        <shortName evidence="1">MVK</shortName>
        <ecNumber evidence="1">2.7.1.36</ecNumber>
    </recommendedName>
</protein>
<proteinExistence type="inferred from homology"/>
<comment type="function">
    <text evidence="1">Catalyzes the phosphorylation of (R)-mevalonate (MVA) to (R)-mevalonate 5-phosphate (MVAP). Functions in the mevalonate (MVA) pathway leading to isopentenyl diphosphate (IPP), a key precursor for the biosynthesis of isoprenoid compounds such as archaeal membrane lipids.</text>
</comment>
<comment type="catalytic activity">
    <reaction evidence="1">
        <text>(R)-mevalonate + ATP = (R)-5-phosphomevalonate + ADP + H(+)</text>
        <dbReference type="Rhea" id="RHEA:17065"/>
        <dbReference type="ChEBI" id="CHEBI:15378"/>
        <dbReference type="ChEBI" id="CHEBI:30616"/>
        <dbReference type="ChEBI" id="CHEBI:36464"/>
        <dbReference type="ChEBI" id="CHEBI:58146"/>
        <dbReference type="ChEBI" id="CHEBI:456216"/>
        <dbReference type="EC" id="2.7.1.36"/>
    </reaction>
</comment>
<comment type="cofactor">
    <cofactor evidence="1">
        <name>Mg(2+)</name>
        <dbReference type="ChEBI" id="CHEBI:18420"/>
    </cofactor>
</comment>
<comment type="pathway">
    <text evidence="1">Isoprenoid biosynthesis; isopentenyl diphosphate biosynthesis via mevalonate pathway; isopentenyl diphosphate from (R)-mevalonate: step 1/3.</text>
</comment>
<comment type="subunit">
    <text evidence="1">Homodimer.</text>
</comment>
<comment type="subcellular location">
    <subcellularLocation>
        <location evidence="1">Cytoplasm</location>
    </subcellularLocation>
</comment>
<comment type="similarity">
    <text evidence="1">Belongs to the GHMP kinase family. Mevalonate kinase subfamily.</text>
</comment>
<sequence length="334" mass="35606">MKVIASAPAKVILFGEHSVVYGKPAIAAAIDLRTFVEAELIREKKIRIEAHDIKVPGLTVSFSENEIYFETDYGKAAEVLSYVREAINLVLEEADKKNVGIKVSITSQIPVGAGLGSSAAVAVATIGAVSKLLGLELSKEEIAKMGHKTELLVQGASSGIDPTVSAIGGFIFYEKGKFEHLPFMELPIVVGYTGSSGPTKELVAMVRKRYEEMPELIVPILEAMGKVVEKAKDVILSNVDKEEKFERLGVLMNINHGLLDALGVSTKKLSELVYAARVAGALGAKITGAGGGGCMYALAPNKQREVATAIRIAGGTPMITEISREGLKIEEVIK</sequence>
<keyword id="KW-0067">ATP-binding</keyword>
<keyword id="KW-0963">Cytoplasm</keyword>
<keyword id="KW-0414">Isoprene biosynthesis</keyword>
<keyword id="KW-0418">Kinase</keyword>
<keyword id="KW-0444">Lipid biosynthesis</keyword>
<keyword id="KW-0443">Lipid metabolism</keyword>
<keyword id="KW-0460">Magnesium</keyword>
<keyword id="KW-0547">Nucleotide-binding</keyword>
<keyword id="KW-1185">Reference proteome</keyword>
<keyword id="KW-0808">Transferase</keyword>
<name>MVK_PYRFU</name>
<feature type="chain" id="PRO_0000156668" description="Mevalonate kinase">
    <location>
        <begin position="1"/>
        <end position="334"/>
    </location>
</feature>
<feature type="active site" description="Proton acceptor" evidence="1">
    <location>
        <position position="161"/>
    </location>
</feature>
<feature type="binding site" evidence="1">
    <location>
        <begin position="110"/>
        <end position="120"/>
    </location>
    <ligand>
        <name>ATP</name>
        <dbReference type="ChEBI" id="CHEBI:30616"/>
    </ligand>
</feature>